<sequence>MMRPPEHQLLSSLDQRSRDIFRLIVETYLNDGDPVGSRNLSRLLPHTLSPATIRNVMSDLEHLGLIYAPHISAGRLPTQIGLRFFVDAFLEVGDLPPEERSSIEAQVRAAGTSNSVESVLTEASQVLSGLSRGAGLVLTNKTDVALKHIEFVRLEPMRALAVLVMQNGDVENRVIDLPAGISTSQLIEASNFLNAHIHGHTLSEAKSELRKLSEETRRELDQLSQELVAKGLAVWSGAGADQPARLIVRGRANLLENVHAQEDIERLRHLFDDLETKDGMVQLLDLAEAGSGVRIFIGSENKLFSLSGSSLVVAPYRDSEQRVIGALGVIGPTRLNYARIVPMVDYTAQIVSRLLR</sequence>
<keyword id="KW-0678">Repressor</keyword>
<keyword id="KW-0346">Stress response</keyword>
<keyword id="KW-0804">Transcription</keyword>
<keyword id="KW-0805">Transcription regulation</keyword>
<proteinExistence type="inferred from homology"/>
<evidence type="ECO:0000255" key="1">
    <source>
        <dbReference type="HAMAP-Rule" id="MF_00081"/>
    </source>
</evidence>
<evidence type="ECO:0000305" key="2"/>
<protein>
    <recommendedName>
        <fullName evidence="1">Heat-inducible transcription repressor HrcA</fullName>
    </recommendedName>
</protein>
<organism>
    <name type="scientific">Brucella melitensis biotype 1 (strain ATCC 23456 / CCUG 17765 / NCTC 10094 / 16M)</name>
    <dbReference type="NCBI Taxonomy" id="224914"/>
    <lineage>
        <taxon>Bacteria</taxon>
        <taxon>Pseudomonadati</taxon>
        <taxon>Pseudomonadota</taxon>
        <taxon>Alphaproteobacteria</taxon>
        <taxon>Hyphomicrobiales</taxon>
        <taxon>Brucellaceae</taxon>
        <taxon>Brucella/Ochrobactrum group</taxon>
        <taxon>Brucella</taxon>
    </lineage>
</organism>
<reference key="1">
    <citation type="journal article" date="2002" name="Proc. Natl. Acad. Sci. U.S.A.">
        <title>The genome sequence of the facultative intracellular pathogen Brucella melitensis.</title>
        <authorList>
            <person name="DelVecchio V.G."/>
            <person name="Kapatral V."/>
            <person name="Redkar R.J."/>
            <person name="Patra G."/>
            <person name="Mujer C."/>
            <person name="Los T."/>
            <person name="Ivanova N."/>
            <person name="Anderson I."/>
            <person name="Bhattacharyya A."/>
            <person name="Lykidis A."/>
            <person name="Reznik G."/>
            <person name="Jablonski L."/>
            <person name="Larsen N."/>
            <person name="D'Souza M."/>
            <person name="Bernal A."/>
            <person name="Mazur M."/>
            <person name="Goltsman E."/>
            <person name="Selkov E."/>
            <person name="Elzer P.H."/>
            <person name="Hagius S."/>
            <person name="O'Callaghan D."/>
            <person name="Letesson J.-J."/>
            <person name="Haselkorn R."/>
            <person name="Kyrpides N.C."/>
            <person name="Overbeek R."/>
        </authorList>
    </citation>
    <scope>NUCLEOTIDE SEQUENCE [LARGE SCALE GENOMIC DNA]</scope>
    <source>
        <strain>ATCC 23456 / CCUG 17765 / NCTC 10094 / 16M</strain>
    </source>
</reference>
<accession>P64396</accession>
<accession>Q8YEV1</accession>
<dbReference type="EMBL" id="AE008917">
    <property type="protein sequence ID" value="AAL52957.1"/>
    <property type="status" value="ALT_INIT"/>
    <property type="molecule type" value="Genomic_DNA"/>
</dbReference>
<dbReference type="PIR" id="AB3474">
    <property type="entry name" value="AB3474"/>
</dbReference>
<dbReference type="SMR" id="P64396"/>
<dbReference type="KEGG" id="bme:BMEI1776"/>
<dbReference type="KEGG" id="bmel:DK63_1709"/>
<dbReference type="PATRIC" id="fig|224914.52.peg.1806"/>
<dbReference type="eggNOG" id="COG1420">
    <property type="taxonomic scope" value="Bacteria"/>
</dbReference>
<dbReference type="PhylomeDB" id="P64396"/>
<dbReference type="Proteomes" id="UP000000419">
    <property type="component" value="Chromosome I"/>
</dbReference>
<dbReference type="GO" id="GO:0003677">
    <property type="term" value="F:DNA binding"/>
    <property type="evidence" value="ECO:0007669"/>
    <property type="project" value="InterPro"/>
</dbReference>
<dbReference type="GO" id="GO:0045892">
    <property type="term" value="P:negative regulation of DNA-templated transcription"/>
    <property type="evidence" value="ECO:0007669"/>
    <property type="project" value="UniProtKB-UniRule"/>
</dbReference>
<dbReference type="Gene3D" id="3.30.450.40">
    <property type="match status" value="1"/>
</dbReference>
<dbReference type="Gene3D" id="3.30.390.60">
    <property type="entry name" value="Heat-inducible transcription repressor hrca homolog, domain 3"/>
    <property type="match status" value="1"/>
</dbReference>
<dbReference type="Gene3D" id="1.10.10.10">
    <property type="entry name" value="Winged helix-like DNA-binding domain superfamily/Winged helix DNA-binding domain"/>
    <property type="match status" value="1"/>
</dbReference>
<dbReference type="HAMAP" id="MF_00081">
    <property type="entry name" value="HrcA"/>
    <property type="match status" value="1"/>
</dbReference>
<dbReference type="InterPro" id="IPR029016">
    <property type="entry name" value="GAF-like_dom_sf"/>
</dbReference>
<dbReference type="InterPro" id="IPR002571">
    <property type="entry name" value="HrcA"/>
</dbReference>
<dbReference type="InterPro" id="IPR021153">
    <property type="entry name" value="HrcA_C"/>
</dbReference>
<dbReference type="InterPro" id="IPR036388">
    <property type="entry name" value="WH-like_DNA-bd_sf"/>
</dbReference>
<dbReference type="InterPro" id="IPR036390">
    <property type="entry name" value="WH_DNA-bd_sf"/>
</dbReference>
<dbReference type="InterPro" id="IPR023120">
    <property type="entry name" value="WHTH_transcript_rep_HrcA_IDD"/>
</dbReference>
<dbReference type="NCBIfam" id="TIGR00331">
    <property type="entry name" value="hrcA"/>
    <property type="match status" value="1"/>
</dbReference>
<dbReference type="PANTHER" id="PTHR34824">
    <property type="entry name" value="HEAT-INDUCIBLE TRANSCRIPTION REPRESSOR HRCA"/>
    <property type="match status" value="1"/>
</dbReference>
<dbReference type="PANTHER" id="PTHR34824:SF1">
    <property type="entry name" value="HEAT-INDUCIBLE TRANSCRIPTION REPRESSOR HRCA"/>
    <property type="match status" value="1"/>
</dbReference>
<dbReference type="Pfam" id="PF01628">
    <property type="entry name" value="HrcA"/>
    <property type="match status" value="1"/>
</dbReference>
<dbReference type="PIRSF" id="PIRSF005485">
    <property type="entry name" value="HrcA"/>
    <property type="match status" value="1"/>
</dbReference>
<dbReference type="SUPFAM" id="SSF55781">
    <property type="entry name" value="GAF domain-like"/>
    <property type="match status" value="1"/>
</dbReference>
<dbReference type="SUPFAM" id="SSF46785">
    <property type="entry name" value="Winged helix' DNA-binding domain"/>
    <property type="match status" value="1"/>
</dbReference>
<name>HRCA_BRUME</name>
<comment type="function">
    <text evidence="1">Negative regulator of class I heat shock genes (grpE-dnaK-dnaJ and groELS operons). Prevents heat-shock induction of these operons.</text>
</comment>
<comment type="similarity">
    <text evidence="1">Belongs to the HrcA family.</text>
</comment>
<comment type="sequence caution" evidence="2">
    <conflict type="erroneous initiation">
        <sequence resource="EMBL-CDS" id="AAL52957"/>
    </conflict>
</comment>
<feature type="chain" id="PRO_0000182458" description="Heat-inducible transcription repressor HrcA">
    <location>
        <begin position="1"/>
        <end position="356"/>
    </location>
</feature>
<gene>
    <name evidence="1" type="primary">hrcA</name>
    <name type="ordered locus">BMEI1776</name>
</gene>